<evidence type="ECO:0000255" key="1">
    <source>
        <dbReference type="HAMAP-Rule" id="MF_01006"/>
    </source>
</evidence>
<sequence>MIDTTAPLSLLEALVLGIVQGLTEFLPISSTAHLRVVPALLGWDDPGVSVTAAIQLGSVAAVIAYFRRDLTQVLTGISRAVRHGQWRDPDARLGVAMVIGTLPILVLGLGIKFFWHAGYASSPLRSVPSIAIVSIVMALFLAMAECMGPRLKQLGGVTGRDGFVVGLAQALAVIPGVSRSGSTLTASLFDGWNRADAARFSFLLGIPAISIAGLVELKSALSTSAGAGPLPLLVGIFSAAVVSWLAIDWLLRFLQRNSTWIFVGYRLVFGAGLLVWWAFKSAN</sequence>
<keyword id="KW-0046">Antibiotic resistance</keyword>
<keyword id="KW-0997">Cell inner membrane</keyword>
<keyword id="KW-1003">Cell membrane</keyword>
<keyword id="KW-0133">Cell shape</keyword>
<keyword id="KW-0961">Cell wall biogenesis/degradation</keyword>
<keyword id="KW-0378">Hydrolase</keyword>
<keyword id="KW-0472">Membrane</keyword>
<keyword id="KW-0573">Peptidoglycan synthesis</keyword>
<keyword id="KW-1185">Reference proteome</keyword>
<keyword id="KW-0812">Transmembrane</keyword>
<keyword id="KW-1133">Transmembrane helix</keyword>
<feature type="chain" id="PRO_0000250273" description="Undecaprenyl-diphosphatase">
    <location>
        <begin position="1"/>
        <end position="283"/>
    </location>
</feature>
<feature type="transmembrane region" description="Helical" evidence="1">
    <location>
        <begin position="46"/>
        <end position="66"/>
    </location>
</feature>
<feature type="transmembrane region" description="Helical" evidence="1">
    <location>
        <begin position="95"/>
        <end position="115"/>
    </location>
</feature>
<feature type="transmembrane region" description="Helical" evidence="1">
    <location>
        <begin position="127"/>
        <end position="147"/>
    </location>
</feature>
<feature type="transmembrane region" description="Helical" evidence="1">
    <location>
        <begin position="154"/>
        <end position="174"/>
    </location>
</feature>
<feature type="transmembrane region" description="Helical" evidence="1">
    <location>
        <begin position="200"/>
        <end position="220"/>
    </location>
</feature>
<feature type="transmembrane region" description="Helical" evidence="1">
    <location>
        <begin position="227"/>
        <end position="247"/>
    </location>
</feature>
<feature type="transmembrane region" description="Helical" evidence="1">
    <location>
        <begin position="259"/>
        <end position="279"/>
    </location>
</feature>
<dbReference type="EC" id="3.6.1.27" evidence="1"/>
<dbReference type="EMBL" id="CP000097">
    <property type="protein sequence ID" value="ABB25330.1"/>
    <property type="molecule type" value="Genomic_DNA"/>
</dbReference>
<dbReference type="RefSeq" id="WP_011359187.1">
    <property type="nucleotide sequence ID" value="NC_007513.1"/>
</dbReference>
<dbReference type="SMR" id="Q3AZZ7"/>
<dbReference type="STRING" id="316279.Syncc9902_0358"/>
<dbReference type="KEGG" id="sye:Syncc9902_0358"/>
<dbReference type="eggNOG" id="COG1968">
    <property type="taxonomic scope" value="Bacteria"/>
</dbReference>
<dbReference type="HOGENOM" id="CLU_060296_1_0_3"/>
<dbReference type="OrthoDB" id="9808289at2"/>
<dbReference type="Proteomes" id="UP000002712">
    <property type="component" value="Chromosome"/>
</dbReference>
<dbReference type="GO" id="GO:0005886">
    <property type="term" value="C:plasma membrane"/>
    <property type="evidence" value="ECO:0007669"/>
    <property type="project" value="UniProtKB-SubCell"/>
</dbReference>
<dbReference type="GO" id="GO:0050380">
    <property type="term" value="F:undecaprenyl-diphosphatase activity"/>
    <property type="evidence" value="ECO:0007669"/>
    <property type="project" value="UniProtKB-UniRule"/>
</dbReference>
<dbReference type="GO" id="GO:0071555">
    <property type="term" value="P:cell wall organization"/>
    <property type="evidence" value="ECO:0007669"/>
    <property type="project" value="UniProtKB-KW"/>
</dbReference>
<dbReference type="GO" id="GO:0009252">
    <property type="term" value="P:peptidoglycan biosynthetic process"/>
    <property type="evidence" value="ECO:0007669"/>
    <property type="project" value="UniProtKB-KW"/>
</dbReference>
<dbReference type="GO" id="GO:0008360">
    <property type="term" value="P:regulation of cell shape"/>
    <property type="evidence" value="ECO:0007669"/>
    <property type="project" value="UniProtKB-KW"/>
</dbReference>
<dbReference type="GO" id="GO:0046677">
    <property type="term" value="P:response to antibiotic"/>
    <property type="evidence" value="ECO:0007669"/>
    <property type="project" value="UniProtKB-UniRule"/>
</dbReference>
<dbReference type="HAMAP" id="MF_01006">
    <property type="entry name" value="Undec_diphosphatase"/>
    <property type="match status" value="1"/>
</dbReference>
<dbReference type="InterPro" id="IPR003824">
    <property type="entry name" value="UppP"/>
</dbReference>
<dbReference type="NCBIfam" id="NF001394">
    <property type="entry name" value="PRK00281.2-5"/>
    <property type="match status" value="1"/>
</dbReference>
<dbReference type="NCBIfam" id="TIGR00753">
    <property type="entry name" value="undec_PP_bacA"/>
    <property type="match status" value="1"/>
</dbReference>
<dbReference type="PANTHER" id="PTHR30622">
    <property type="entry name" value="UNDECAPRENYL-DIPHOSPHATASE"/>
    <property type="match status" value="1"/>
</dbReference>
<dbReference type="PANTHER" id="PTHR30622:SF4">
    <property type="entry name" value="UNDECAPRENYL-DIPHOSPHATASE"/>
    <property type="match status" value="1"/>
</dbReference>
<dbReference type="Pfam" id="PF02673">
    <property type="entry name" value="BacA"/>
    <property type="match status" value="1"/>
</dbReference>
<comment type="function">
    <text evidence="1">Catalyzes the dephosphorylation of undecaprenyl diphosphate (UPP). Confers resistance to bacitracin.</text>
</comment>
<comment type="catalytic activity">
    <reaction evidence="1">
        <text>di-trans,octa-cis-undecaprenyl diphosphate + H2O = di-trans,octa-cis-undecaprenyl phosphate + phosphate + H(+)</text>
        <dbReference type="Rhea" id="RHEA:28094"/>
        <dbReference type="ChEBI" id="CHEBI:15377"/>
        <dbReference type="ChEBI" id="CHEBI:15378"/>
        <dbReference type="ChEBI" id="CHEBI:43474"/>
        <dbReference type="ChEBI" id="CHEBI:58405"/>
        <dbReference type="ChEBI" id="CHEBI:60392"/>
        <dbReference type="EC" id="3.6.1.27"/>
    </reaction>
</comment>
<comment type="subcellular location">
    <subcellularLocation>
        <location evidence="1">Cell inner membrane</location>
        <topology evidence="1">Multi-pass membrane protein</topology>
    </subcellularLocation>
</comment>
<comment type="miscellaneous">
    <text>Bacitracin is thought to be involved in the inhibition of peptidoglycan synthesis by sequestering undecaprenyl diphosphate, thereby reducing the pool of lipid carrier available.</text>
</comment>
<comment type="similarity">
    <text evidence="1">Belongs to the UppP family.</text>
</comment>
<accession>Q3AZZ7</accession>
<proteinExistence type="inferred from homology"/>
<gene>
    <name evidence="1" type="primary">uppP</name>
    <name type="ordered locus">Syncc9902_0358</name>
</gene>
<name>UPPP_SYNS9</name>
<organism>
    <name type="scientific">Synechococcus sp. (strain CC9902)</name>
    <dbReference type="NCBI Taxonomy" id="316279"/>
    <lineage>
        <taxon>Bacteria</taxon>
        <taxon>Bacillati</taxon>
        <taxon>Cyanobacteriota</taxon>
        <taxon>Cyanophyceae</taxon>
        <taxon>Synechococcales</taxon>
        <taxon>Synechococcaceae</taxon>
        <taxon>Synechococcus</taxon>
    </lineage>
</organism>
<protein>
    <recommendedName>
        <fullName evidence="1">Undecaprenyl-diphosphatase</fullName>
        <ecNumber evidence="1">3.6.1.27</ecNumber>
    </recommendedName>
    <alternativeName>
        <fullName evidence="1">Bacitracin resistance protein</fullName>
    </alternativeName>
    <alternativeName>
        <fullName evidence="1">Undecaprenyl pyrophosphate phosphatase</fullName>
    </alternativeName>
</protein>
<reference key="1">
    <citation type="submission" date="2005-08" db="EMBL/GenBank/DDBJ databases">
        <title>Complete sequence of Synechococcus sp. CC9902.</title>
        <authorList>
            <person name="Copeland A."/>
            <person name="Lucas S."/>
            <person name="Lapidus A."/>
            <person name="Barry K."/>
            <person name="Detter J.C."/>
            <person name="Glavina T."/>
            <person name="Hammon N."/>
            <person name="Israni S."/>
            <person name="Pitluck S."/>
            <person name="Martinez M."/>
            <person name="Schmutz J."/>
            <person name="Larimer F."/>
            <person name="Land M."/>
            <person name="Kyrpides N."/>
            <person name="Ivanova N."/>
            <person name="Richardson P."/>
        </authorList>
    </citation>
    <scope>NUCLEOTIDE SEQUENCE [LARGE SCALE GENOMIC DNA]</scope>
    <source>
        <strain>CC9902</strain>
    </source>
</reference>